<name>RL361_ECOUT</name>
<reference key="1">
    <citation type="journal article" date="2006" name="Proc. Natl. Acad. Sci. U.S.A.">
        <title>Identification of genes subject to positive selection in uropathogenic strains of Escherichia coli: a comparative genomics approach.</title>
        <authorList>
            <person name="Chen S.L."/>
            <person name="Hung C.-S."/>
            <person name="Xu J."/>
            <person name="Reigstad C.S."/>
            <person name="Magrini V."/>
            <person name="Sabo A."/>
            <person name="Blasiar D."/>
            <person name="Bieri T."/>
            <person name="Meyer R.R."/>
            <person name="Ozersky P."/>
            <person name="Armstrong J.R."/>
            <person name="Fulton R.S."/>
            <person name="Latreille J.P."/>
            <person name="Spieth J."/>
            <person name="Hooton T.M."/>
            <person name="Mardis E.R."/>
            <person name="Hultgren S.J."/>
            <person name="Gordon J.I."/>
        </authorList>
    </citation>
    <scope>NUCLEOTIDE SEQUENCE [LARGE SCALE GENOMIC DNA]</scope>
    <source>
        <strain>UTI89 / UPEC</strain>
    </source>
</reference>
<accession>Q1R632</accession>
<feature type="chain" id="PRO_0000344674" description="Large ribosomal subunit protein bL36A">
    <location>
        <begin position="1"/>
        <end position="38"/>
    </location>
</feature>
<protein>
    <recommendedName>
        <fullName evidence="1">Large ribosomal subunit protein bL36A</fullName>
    </recommendedName>
    <alternativeName>
        <fullName evidence="2">50S ribosomal protein L36 1</fullName>
    </alternativeName>
</protein>
<proteinExistence type="inferred from homology"/>
<evidence type="ECO:0000255" key="1">
    <source>
        <dbReference type="HAMAP-Rule" id="MF_00251"/>
    </source>
</evidence>
<evidence type="ECO:0000305" key="2"/>
<organism>
    <name type="scientific">Escherichia coli (strain UTI89 / UPEC)</name>
    <dbReference type="NCBI Taxonomy" id="364106"/>
    <lineage>
        <taxon>Bacteria</taxon>
        <taxon>Pseudomonadati</taxon>
        <taxon>Pseudomonadota</taxon>
        <taxon>Gammaproteobacteria</taxon>
        <taxon>Enterobacterales</taxon>
        <taxon>Enterobacteriaceae</taxon>
        <taxon>Escherichia</taxon>
    </lineage>
</organism>
<sequence length="38" mass="4364">MKVRASVKKLCRNCKIVKRDGVIRVICSAEPKHKQRQG</sequence>
<gene>
    <name evidence="1" type="primary">rpmJ1</name>
    <name type="ordered locus">UTI89_C3745</name>
</gene>
<keyword id="KW-0687">Ribonucleoprotein</keyword>
<keyword id="KW-0689">Ribosomal protein</keyword>
<comment type="similarity">
    <text evidence="1">Belongs to the bacterial ribosomal protein bL36 family.</text>
</comment>
<dbReference type="EMBL" id="CP000243">
    <property type="protein sequence ID" value="ABE09182.1"/>
    <property type="molecule type" value="Genomic_DNA"/>
</dbReference>
<dbReference type="SMR" id="Q1R632"/>
<dbReference type="KEGG" id="eci:UTI89_C3745"/>
<dbReference type="HOGENOM" id="CLU_135723_6_2_6"/>
<dbReference type="Proteomes" id="UP000001952">
    <property type="component" value="Chromosome"/>
</dbReference>
<dbReference type="GO" id="GO:0005737">
    <property type="term" value="C:cytoplasm"/>
    <property type="evidence" value="ECO:0007669"/>
    <property type="project" value="UniProtKB-ARBA"/>
</dbReference>
<dbReference type="GO" id="GO:1990904">
    <property type="term" value="C:ribonucleoprotein complex"/>
    <property type="evidence" value="ECO:0007669"/>
    <property type="project" value="UniProtKB-KW"/>
</dbReference>
<dbReference type="GO" id="GO:0005840">
    <property type="term" value="C:ribosome"/>
    <property type="evidence" value="ECO:0007669"/>
    <property type="project" value="UniProtKB-KW"/>
</dbReference>
<dbReference type="GO" id="GO:0003735">
    <property type="term" value="F:structural constituent of ribosome"/>
    <property type="evidence" value="ECO:0007669"/>
    <property type="project" value="InterPro"/>
</dbReference>
<dbReference type="GO" id="GO:0006412">
    <property type="term" value="P:translation"/>
    <property type="evidence" value="ECO:0007669"/>
    <property type="project" value="UniProtKB-UniRule"/>
</dbReference>
<dbReference type="HAMAP" id="MF_00251">
    <property type="entry name" value="Ribosomal_bL36"/>
    <property type="match status" value="1"/>
</dbReference>
<dbReference type="InterPro" id="IPR000473">
    <property type="entry name" value="Ribosomal_bL36"/>
</dbReference>
<dbReference type="InterPro" id="IPR035977">
    <property type="entry name" value="Ribosomal_bL36_sp"/>
</dbReference>
<dbReference type="NCBIfam" id="TIGR01022">
    <property type="entry name" value="rpmJ_bact"/>
    <property type="match status" value="1"/>
</dbReference>
<dbReference type="PANTHER" id="PTHR42888">
    <property type="entry name" value="50S RIBOSOMAL PROTEIN L36, CHLOROPLASTIC"/>
    <property type="match status" value="1"/>
</dbReference>
<dbReference type="PANTHER" id="PTHR42888:SF1">
    <property type="entry name" value="LARGE RIBOSOMAL SUBUNIT PROTEIN BL36C"/>
    <property type="match status" value="1"/>
</dbReference>
<dbReference type="Pfam" id="PF00444">
    <property type="entry name" value="Ribosomal_L36"/>
    <property type="match status" value="1"/>
</dbReference>
<dbReference type="SUPFAM" id="SSF57840">
    <property type="entry name" value="Ribosomal protein L36"/>
    <property type="match status" value="1"/>
</dbReference>
<dbReference type="PROSITE" id="PS00828">
    <property type="entry name" value="RIBOSOMAL_L36"/>
    <property type="match status" value="1"/>
</dbReference>